<reference key="1">
    <citation type="journal article" date="2007" name="PLoS Genet.">
        <title>The complete genome sequence of Yersinia pseudotuberculosis IP31758, the causative agent of Far East scarlet-like fever.</title>
        <authorList>
            <person name="Eppinger M."/>
            <person name="Rosovitz M.J."/>
            <person name="Fricke W.F."/>
            <person name="Rasko D.A."/>
            <person name="Kokorina G."/>
            <person name="Fayolle C."/>
            <person name="Lindler L.E."/>
            <person name="Carniel E."/>
            <person name="Ravel J."/>
        </authorList>
    </citation>
    <scope>NUCLEOTIDE SEQUENCE [LARGE SCALE GENOMIC DNA]</scope>
    <source>
        <strain>IP 31758</strain>
    </source>
</reference>
<comment type="function">
    <text evidence="1">Catalyzes the reductive methylation of 2'-deoxyuridine-5'-monophosphate (dUMP) to 2'-deoxythymidine-5'-monophosphate (dTMP) while utilizing 5,10-methylenetetrahydrofolate (mTHF) as the methyl donor and reductant in the reaction, yielding dihydrofolate (DHF) as a by-product. This enzymatic reaction provides an intracellular de novo source of dTMP, an essential precursor for DNA biosynthesis.</text>
</comment>
<comment type="catalytic activity">
    <reaction evidence="1">
        <text>dUMP + (6R)-5,10-methylene-5,6,7,8-tetrahydrofolate = 7,8-dihydrofolate + dTMP</text>
        <dbReference type="Rhea" id="RHEA:12104"/>
        <dbReference type="ChEBI" id="CHEBI:15636"/>
        <dbReference type="ChEBI" id="CHEBI:57451"/>
        <dbReference type="ChEBI" id="CHEBI:63528"/>
        <dbReference type="ChEBI" id="CHEBI:246422"/>
        <dbReference type="EC" id="2.1.1.45"/>
    </reaction>
</comment>
<comment type="pathway">
    <text evidence="1">Pyrimidine metabolism; dTTP biosynthesis.</text>
</comment>
<comment type="subunit">
    <text evidence="1">Homodimer.</text>
</comment>
<comment type="subcellular location">
    <subcellularLocation>
        <location evidence="1">Cytoplasm</location>
    </subcellularLocation>
</comment>
<comment type="similarity">
    <text evidence="1">Belongs to the thymidylate synthase family. Bacterial-type ThyA subfamily.</text>
</comment>
<keyword id="KW-0963">Cytoplasm</keyword>
<keyword id="KW-0489">Methyltransferase</keyword>
<keyword id="KW-0545">Nucleotide biosynthesis</keyword>
<keyword id="KW-0808">Transferase</keyword>
<gene>
    <name evidence="1" type="primary">thyA</name>
    <name type="ordered locus">YpsIP31758_0984</name>
</gene>
<feature type="chain" id="PRO_1000057063" description="Thymidylate synthase">
    <location>
        <begin position="1"/>
        <end position="264"/>
    </location>
</feature>
<feature type="active site" description="Nucleophile" evidence="1">
    <location>
        <position position="146"/>
    </location>
</feature>
<feature type="binding site" description="in other chain" evidence="1">
    <location>
        <position position="21"/>
    </location>
    <ligand>
        <name>dUMP</name>
        <dbReference type="ChEBI" id="CHEBI:246422"/>
        <note>ligand shared between dimeric partners</note>
    </ligand>
</feature>
<feature type="binding site" evidence="1">
    <location>
        <position position="51"/>
    </location>
    <ligand>
        <name>(6R)-5,10-methylene-5,6,7,8-tetrahydrofolate</name>
        <dbReference type="ChEBI" id="CHEBI:15636"/>
    </ligand>
</feature>
<feature type="binding site" evidence="1">
    <location>
        <begin position="126"/>
        <end position="127"/>
    </location>
    <ligand>
        <name>dUMP</name>
        <dbReference type="ChEBI" id="CHEBI:246422"/>
        <note>ligand shared between dimeric partners</note>
    </ligand>
</feature>
<feature type="binding site" description="in other chain" evidence="1">
    <location>
        <begin position="166"/>
        <end position="169"/>
    </location>
    <ligand>
        <name>dUMP</name>
        <dbReference type="ChEBI" id="CHEBI:246422"/>
        <note>ligand shared between dimeric partners</note>
    </ligand>
</feature>
<feature type="binding site" evidence="1">
    <location>
        <position position="169"/>
    </location>
    <ligand>
        <name>(6R)-5,10-methylene-5,6,7,8-tetrahydrofolate</name>
        <dbReference type="ChEBI" id="CHEBI:15636"/>
    </ligand>
</feature>
<feature type="binding site" description="in other chain" evidence="1">
    <location>
        <position position="177"/>
    </location>
    <ligand>
        <name>dUMP</name>
        <dbReference type="ChEBI" id="CHEBI:246422"/>
        <note>ligand shared between dimeric partners</note>
    </ligand>
</feature>
<feature type="binding site" description="in other chain" evidence="1">
    <location>
        <begin position="207"/>
        <end position="209"/>
    </location>
    <ligand>
        <name>dUMP</name>
        <dbReference type="ChEBI" id="CHEBI:246422"/>
        <note>ligand shared between dimeric partners</note>
    </ligand>
</feature>
<feature type="binding site" evidence="1">
    <location>
        <position position="263"/>
    </location>
    <ligand>
        <name>(6R)-5,10-methylene-5,6,7,8-tetrahydrofolate</name>
        <dbReference type="ChEBI" id="CHEBI:15636"/>
    </ligand>
</feature>
<proteinExistence type="inferred from homology"/>
<dbReference type="EC" id="2.1.1.45" evidence="1"/>
<dbReference type="EMBL" id="CP000720">
    <property type="protein sequence ID" value="ABS46376.1"/>
    <property type="molecule type" value="Genomic_DNA"/>
</dbReference>
<dbReference type="RefSeq" id="WP_011192873.1">
    <property type="nucleotide sequence ID" value="NC_009708.1"/>
</dbReference>
<dbReference type="SMR" id="A7FFE0"/>
<dbReference type="GeneID" id="96662402"/>
<dbReference type="KEGG" id="ypi:YpsIP31758_0984"/>
<dbReference type="HOGENOM" id="CLU_021669_0_0_6"/>
<dbReference type="UniPathway" id="UPA00575"/>
<dbReference type="Proteomes" id="UP000002412">
    <property type="component" value="Chromosome"/>
</dbReference>
<dbReference type="GO" id="GO:0005829">
    <property type="term" value="C:cytosol"/>
    <property type="evidence" value="ECO:0007669"/>
    <property type="project" value="TreeGrafter"/>
</dbReference>
<dbReference type="GO" id="GO:0004799">
    <property type="term" value="F:thymidylate synthase activity"/>
    <property type="evidence" value="ECO:0007669"/>
    <property type="project" value="UniProtKB-UniRule"/>
</dbReference>
<dbReference type="GO" id="GO:0006231">
    <property type="term" value="P:dTMP biosynthetic process"/>
    <property type="evidence" value="ECO:0007669"/>
    <property type="project" value="UniProtKB-UniRule"/>
</dbReference>
<dbReference type="GO" id="GO:0006235">
    <property type="term" value="P:dTTP biosynthetic process"/>
    <property type="evidence" value="ECO:0007669"/>
    <property type="project" value="UniProtKB-UniRule"/>
</dbReference>
<dbReference type="GO" id="GO:0032259">
    <property type="term" value="P:methylation"/>
    <property type="evidence" value="ECO:0007669"/>
    <property type="project" value="UniProtKB-KW"/>
</dbReference>
<dbReference type="CDD" id="cd00351">
    <property type="entry name" value="TS_Pyrimidine_HMase"/>
    <property type="match status" value="1"/>
</dbReference>
<dbReference type="FunFam" id="3.30.572.10:FF:000001">
    <property type="entry name" value="Thymidylate synthase"/>
    <property type="match status" value="1"/>
</dbReference>
<dbReference type="Gene3D" id="3.30.572.10">
    <property type="entry name" value="Thymidylate synthase/dCMP hydroxymethylase domain"/>
    <property type="match status" value="1"/>
</dbReference>
<dbReference type="HAMAP" id="MF_00008">
    <property type="entry name" value="Thymidy_synth_bact"/>
    <property type="match status" value="1"/>
</dbReference>
<dbReference type="InterPro" id="IPR045097">
    <property type="entry name" value="Thymidate_synth/dCMP_Mease"/>
</dbReference>
<dbReference type="InterPro" id="IPR023451">
    <property type="entry name" value="Thymidate_synth/dCMP_Mease_dom"/>
</dbReference>
<dbReference type="InterPro" id="IPR036926">
    <property type="entry name" value="Thymidate_synth/dCMP_Mease_sf"/>
</dbReference>
<dbReference type="InterPro" id="IPR000398">
    <property type="entry name" value="Thymidylate_synthase"/>
</dbReference>
<dbReference type="InterPro" id="IPR020940">
    <property type="entry name" value="Thymidylate_synthase_AS"/>
</dbReference>
<dbReference type="NCBIfam" id="NF002497">
    <property type="entry name" value="PRK01827.1-3"/>
    <property type="match status" value="1"/>
</dbReference>
<dbReference type="NCBIfam" id="NF002499">
    <property type="entry name" value="PRK01827.1-5"/>
    <property type="match status" value="1"/>
</dbReference>
<dbReference type="NCBIfam" id="TIGR03284">
    <property type="entry name" value="thym_sym"/>
    <property type="match status" value="2"/>
</dbReference>
<dbReference type="PANTHER" id="PTHR11548:SF9">
    <property type="entry name" value="THYMIDYLATE SYNTHASE"/>
    <property type="match status" value="1"/>
</dbReference>
<dbReference type="PANTHER" id="PTHR11548">
    <property type="entry name" value="THYMIDYLATE SYNTHASE 1"/>
    <property type="match status" value="1"/>
</dbReference>
<dbReference type="Pfam" id="PF00303">
    <property type="entry name" value="Thymidylat_synt"/>
    <property type="match status" value="1"/>
</dbReference>
<dbReference type="PRINTS" id="PR00108">
    <property type="entry name" value="THYMDSNTHASE"/>
</dbReference>
<dbReference type="SUPFAM" id="SSF55831">
    <property type="entry name" value="Thymidylate synthase/dCMP hydroxymethylase"/>
    <property type="match status" value="1"/>
</dbReference>
<dbReference type="PROSITE" id="PS00091">
    <property type="entry name" value="THYMIDYLATE_SYNTHASE"/>
    <property type="match status" value="1"/>
</dbReference>
<evidence type="ECO:0000255" key="1">
    <source>
        <dbReference type="HAMAP-Rule" id="MF_00008"/>
    </source>
</evidence>
<protein>
    <recommendedName>
        <fullName evidence="1">Thymidylate synthase</fullName>
        <shortName evidence="1">TS</shortName>
        <shortName evidence="1">TSase</shortName>
        <ecNumber evidence="1">2.1.1.45</ecNumber>
    </recommendedName>
</protein>
<name>TYSY_YERP3</name>
<sequence length="264" mass="30113">MKQYLDLMKKVLEEGTPKADRTGTGTLSIFGHQMRFNLQDGFPLVTTKRCHLRSIIHELLWFLNGDTNIAYLKENNVSIWDEWADENGDLGPIYGKQWRAWGAADGRKIDQLSNVVNQLKQDPDSRRIIVSAWNVGELDQMALAPCHAFFQFYVADGKLSCQLYQRSCDVFLGLPFNIASYALLVHMMAQQCDLAVGDFVWTGGDTHLYSNHIDQTHLQLSREPRALPKLVIKRKPDSLFDYHFDDFDIEGYDPHPGIKAPIAI</sequence>
<organism>
    <name type="scientific">Yersinia pseudotuberculosis serotype O:1b (strain IP 31758)</name>
    <dbReference type="NCBI Taxonomy" id="349747"/>
    <lineage>
        <taxon>Bacteria</taxon>
        <taxon>Pseudomonadati</taxon>
        <taxon>Pseudomonadota</taxon>
        <taxon>Gammaproteobacteria</taxon>
        <taxon>Enterobacterales</taxon>
        <taxon>Yersiniaceae</taxon>
        <taxon>Yersinia</taxon>
    </lineage>
</organism>
<accession>A7FFE0</accession>